<evidence type="ECO:0000250" key="1">
    <source>
        <dbReference type="UniProtKB" id="Q8BKG3"/>
    </source>
</evidence>
<evidence type="ECO:0000255" key="2"/>
<evidence type="ECO:0000255" key="3">
    <source>
        <dbReference type="PROSITE-ProRule" id="PRU00114"/>
    </source>
</evidence>
<evidence type="ECO:0000255" key="4">
    <source>
        <dbReference type="PROSITE-ProRule" id="PRU00159"/>
    </source>
</evidence>
<evidence type="ECO:0000256" key="5">
    <source>
        <dbReference type="SAM" id="MobiDB-lite"/>
    </source>
</evidence>
<evidence type="ECO:0000269" key="6">
    <source>
    </source>
</evidence>
<evidence type="ECO:0000269" key="7">
    <source>
    </source>
</evidence>
<evidence type="ECO:0000269" key="8">
    <source>
    </source>
</evidence>
<evidence type="ECO:0000269" key="9">
    <source>
    </source>
</evidence>
<evidence type="ECO:0000269" key="10">
    <source>
    </source>
</evidence>
<evidence type="ECO:0000269" key="11">
    <source>
    </source>
</evidence>
<evidence type="ECO:0000269" key="12">
    <source>
    </source>
</evidence>
<evidence type="ECO:0000269" key="13">
    <source>
    </source>
</evidence>
<evidence type="ECO:0000269" key="14">
    <source>
    </source>
</evidence>
<evidence type="ECO:0000303" key="15">
    <source>
    </source>
</evidence>
<evidence type="ECO:0000303" key="16">
    <source>
    </source>
</evidence>
<evidence type="ECO:0000305" key="17"/>
<evidence type="ECO:0007829" key="18">
    <source>
        <dbReference type="PDB" id="6VG3"/>
    </source>
</evidence>
<keyword id="KW-0002">3D-structure</keyword>
<keyword id="KW-0025">Alternative splicing</keyword>
<keyword id="KW-0130">Cell adhesion</keyword>
<keyword id="KW-0965">Cell junction</keyword>
<keyword id="KW-1015">Disulfide bond</keyword>
<keyword id="KW-0325">Glycoprotein</keyword>
<keyword id="KW-0393">Immunoglobulin domain</keyword>
<keyword id="KW-0472">Membrane</keyword>
<keyword id="KW-0597">Phosphoprotein</keyword>
<keyword id="KW-1267">Proteomics identification</keyword>
<keyword id="KW-0675">Receptor</keyword>
<keyword id="KW-1185">Reference proteome</keyword>
<keyword id="KW-0677">Repeat</keyword>
<keyword id="KW-0732">Signal</keyword>
<keyword id="KW-0812">Transmembrane</keyword>
<keyword id="KW-1133">Transmembrane helix</keyword>
<keyword id="KW-0879">Wnt signaling pathway</keyword>
<proteinExistence type="evidence at protein level"/>
<accession>Q13308</accession>
<accession>A8K974</accession>
<accession>B7Z477</accession>
<accession>E9PFZ5</accession>
<accession>Q13417</accession>
<accession>Q5T650</accession>
<accession>Q6IQ54</accession>
<accession>Q8NFA5</accession>
<accession>Q8NFA6</accession>
<accession>Q8NFA7</accession>
<accession>Q8NFA8</accession>
<feature type="signal peptide" evidence="2">
    <location>
        <begin position="1"/>
        <end position="30"/>
    </location>
</feature>
<feature type="chain" id="PRO_0000016748" description="Inactive tyrosine-protein kinase 7">
    <location>
        <begin position="31"/>
        <end position="1070"/>
    </location>
</feature>
<feature type="topological domain" description="Extracellular" evidence="2">
    <location>
        <begin position="31"/>
        <end position="704"/>
    </location>
</feature>
<feature type="transmembrane region" description="Helical" evidence="2">
    <location>
        <begin position="705"/>
        <end position="725"/>
    </location>
</feature>
<feature type="topological domain" description="Cytoplasmic" evidence="2">
    <location>
        <begin position="726"/>
        <end position="1070"/>
    </location>
</feature>
<feature type="domain" description="Ig-like C2-type 1">
    <location>
        <begin position="31"/>
        <end position="120"/>
    </location>
</feature>
<feature type="domain" description="Ig-like C2-type 2">
    <location>
        <begin position="128"/>
        <end position="218"/>
    </location>
</feature>
<feature type="domain" description="Ig-like C2-type 3">
    <location>
        <begin position="225"/>
        <end position="317"/>
    </location>
</feature>
<feature type="domain" description="Ig-like C2-type 4">
    <location>
        <begin position="309"/>
        <end position="407"/>
    </location>
</feature>
<feature type="domain" description="Ig-like C2-type 5">
    <location>
        <begin position="412"/>
        <end position="497"/>
    </location>
</feature>
<feature type="domain" description="Ig-like C2-type 6">
    <location>
        <begin position="503"/>
        <end position="586"/>
    </location>
</feature>
<feature type="domain" description="Ig-like C2-type 7">
    <location>
        <begin position="578"/>
        <end position="680"/>
    </location>
</feature>
<feature type="domain" description="Protein kinase; inactive" evidence="4">
    <location>
        <begin position="796"/>
        <end position="1066"/>
    </location>
</feature>
<feature type="region of interest" description="Disordered" evidence="5">
    <location>
        <begin position="736"/>
        <end position="759"/>
    </location>
</feature>
<feature type="region of interest" description="Disordered" evidence="5">
    <location>
        <begin position="773"/>
        <end position="793"/>
    </location>
</feature>
<feature type="region of interest" description="Interaction with CTNNB1" evidence="14">
    <location>
        <begin position="794"/>
        <end position="1070"/>
    </location>
</feature>
<feature type="site" description="Cleavage; by MMP14">
    <location>
        <begin position="621"/>
        <end position="622"/>
    </location>
</feature>
<feature type="modified residue" description="Phosphoserine" evidence="1">
    <location>
        <position position="1064"/>
    </location>
</feature>
<feature type="glycosylation site" description="N-linked (GlcNAc...) asparagine" evidence="10">
    <location>
        <position position="116"/>
    </location>
</feature>
<feature type="glycosylation site" description="N-linked (GlcNAc...) asparagine" evidence="10">
    <location>
        <position position="175"/>
    </location>
</feature>
<feature type="glycosylation site" description="N-linked (GlcNAc...) asparagine" evidence="2">
    <location>
        <position position="184"/>
    </location>
</feature>
<feature type="glycosylation site" description="N-linked (GlcNAc...) asparagine" evidence="2">
    <location>
        <position position="214"/>
    </location>
</feature>
<feature type="glycosylation site" description="N-linked (GlcNAc...) asparagine" evidence="10">
    <location>
        <position position="268"/>
    </location>
</feature>
<feature type="glycosylation site" description="N-linked (GlcNAc...) asparagine" evidence="10">
    <location>
        <position position="283"/>
    </location>
</feature>
<feature type="glycosylation site" description="N-linked (GlcNAc...) asparagine" evidence="2">
    <location>
        <position position="405"/>
    </location>
</feature>
<feature type="glycosylation site" description="N-linked (GlcNAc...) asparagine" evidence="2">
    <location>
        <position position="463"/>
    </location>
</feature>
<feature type="glycosylation site" description="N-linked (GlcNAc...) asparagine" evidence="2">
    <location>
        <position position="567"/>
    </location>
</feature>
<feature type="glycosylation site" description="N-linked (GlcNAc...) asparagine" evidence="6 9">
    <location>
        <position position="646"/>
    </location>
</feature>
<feature type="disulfide bond" evidence="3">
    <location>
        <begin position="53"/>
        <end position="101"/>
    </location>
</feature>
<feature type="disulfide bond" evidence="3">
    <location>
        <begin position="150"/>
        <end position="200"/>
    </location>
</feature>
<feature type="disulfide bond" evidence="3">
    <location>
        <begin position="246"/>
        <end position="301"/>
    </location>
</feature>
<feature type="disulfide bond" evidence="3">
    <location>
        <begin position="343"/>
        <end position="391"/>
    </location>
</feature>
<feature type="disulfide bond" evidence="3">
    <location>
        <begin position="433"/>
        <end position="481"/>
    </location>
</feature>
<feature type="disulfide bond" evidence="3">
    <location>
        <begin position="524"/>
        <end position="570"/>
    </location>
</feature>
<feature type="disulfide bond" evidence="3">
    <location>
        <begin position="613"/>
        <end position="664"/>
    </location>
</feature>
<feature type="splice variant" id="VSP_044775" description="In isoform 6." evidence="16">
    <original>MGAARGSPARPRRLPLLSVLLLPLLG</original>
    <variation>MGSFLSGEKRPSAPTVGSAMEKKEFPTPPGRVGP</variation>
    <location>
        <begin position="1"/>
        <end position="26"/>
    </location>
</feature>
<feature type="splice variant" id="VSP_037181" description="In isoform 3." evidence="15">
    <original>TVPSWLKKPQDSQLEEGKPGYLDCLTQATPKPTVVWYRNQMLISEDSRFEVFKNGTLRINSVEVYDGTWYRCMSSTPAGSIEAQARVQVLEKLKFTPPPQPQQCMEFDKEATVPCSATGREKPTIKWERAD</original>
    <variation>N</variation>
    <location>
        <begin position="410"/>
        <end position="540"/>
    </location>
</feature>
<feature type="splice variant" id="VSP_037182" description="In isoform 2." evidence="15 16">
    <location>
        <begin position="500"/>
        <end position="539"/>
    </location>
</feature>
<feature type="splice variant" id="VSP_037183" description="In isoform 4." evidence="15">
    <location>
        <begin position="627"/>
        <end position="682"/>
    </location>
</feature>
<feature type="splice variant" id="VSP_037184" description="In isoform 5." evidence="15">
    <original>KSEFGEVFLAKAQ</original>
    <variation>RPQAVPEDFQEQG</variation>
    <location>
        <begin position="804"/>
        <end position="816"/>
    </location>
</feature>
<feature type="splice variant" id="VSP_037185" description="In isoform 5." evidence="15">
    <location>
        <begin position="817"/>
        <end position="1070"/>
    </location>
</feature>
<feature type="sequence variant" id="VAR_041502" description="In dbSNP:rs56188167." evidence="7">
    <original>R</original>
    <variation>H</variation>
    <location>
        <position position="276"/>
    </location>
</feature>
<feature type="sequence variant" id="VAR_041503" description="In dbSNP:rs34021075." evidence="7">
    <original>T</original>
    <variation>S</variation>
    <location>
        <position position="410"/>
    </location>
</feature>
<feature type="sequence variant" id="VAR_041504" description="In dbSNP:rs9472017." evidence="7">
    <original>E</original>
    <variation>D</variation>
    <location>
        <position position="745"/>
    </location>
</feature>
<feature type="sequence variant" id="VAR_041505" description="In dbSNP:rs56216742." evidence="7">
    <original>E</original>
    <variation>Q</variation>
    <location>
        <position position="766"/>
    </location>
</feature>
<feature type="sequence variant" id="VAR_041506" description="In dbSNP:rs34764696." evidence="7">
    <original>A</original>
    <variation>V</variation>
    <location>
        <position position="777"/>
    </location>
</feature>
<feature type="sequence variant" id="VAR_041507" description="In dbSNP:rs55820547." evidence="7">
    <original>H</original>
    <variation>R</variation>
    <location>
        <position position="783"/>
    </location>
</feature>
<feature type="sequence variant" id="VAR_041508" description="In a colorectal adenocarcinoma sample; somatic mutation." evidence="7">
    <original>A</original>
    <variation>V</variation>
    <location>
        <position position="933"/>
    </location>
</feature>
<feature type="sequence variant" id="VAR_041509" description="In dbSNP:rs55755163." evidence="7">
    <original>P</original>
    <variation>T</variation>
    <location>
        <position position="1029"/>
    </location>
</feature>
<feature type="sequence variant" id="VAR_041510" description="In dbSNP:rs34865794." evidence="7">
    <original>R</original>
    <variation>Q</variation>
    <location>
        <position position="1038"/>
    </location>
</feature>
<feature type="mutagenesis site" description="Prevents proteolysis by MMP14." evidence="12">
    <original>L</original>
    <variation>D</variation>
    <location>
        <position position="622"/>
    </location>
</feature>
<feature type="mutagenesis site" description="No impact on proteolysis by MMP14." evidence="12">
    <original>M</original>
    <variation>R</variation>
    <location>
        <position position="641"/>
    </location>
</feature>
<feature type="mutagenesis site" description="No impact on proteolysis by MMP14." evidence="12">
    <original>M</original>
    <variation>D</variation>
    <location>
        <position position="701"/>
    </location>
</feature>
<feature type="sequence conflict" description="In Ref. 4; BAF85278." evidence="17" ref="4">
    <original>F</original>
    <variation>L</variation>
    <location>
        <position position="87"/>
    </location>
</feature>
<feature type="sequence conflict" description="In Ref. 1; AAA87565." evidence="17" ref="1">
    <original>R</original>
    <variation>P</variation>
    <location>
        <position position="92"/>
    </location>
</feature>
<feature type="sequence conflict" description="In Ref. 7; AAH71557." evidence="17" ref="7">
    <original>L</original>
    <variation>P</variation>
    <location>
        <position position="93"/>
    </location>
</feature>
<feature type="sequence conflict" description="In Ref. 1; AAA87565." evidence="17" ref="1">
    <original>T</original>
    <variation>K</variation>
    <location>
        <position position="147"/>
    </location>
</feature>
<feature type="sequence conflict" description="In Ref. 1; AAA87565." evidence="17" ref="1">
    <original>G</original>
    <variation>S</variation>
    <location>
        <position position="207"/>
    </location>
</feature>
<feature type="sequence conflict" description="In Ref. 1; AAA87565." evidence="17" ref="1">
    <original>RV</original>
    <variation>VL</variation>
    <location>
        <begin position="495"/>
        <end position="496"/>
    </location>
</feature>
<feature type="sequence conflict" description="In Ref. 1; AAA87565." evidence="17" ref="1">
    <original>E</original>
    <variation>G</variation>
    <location>
        <position position="515"/>
    </location>
</feature>
<feature type="sequence conflict" description="In Ref. 4; BAH12463." evidence="17" ref="4">
    <original>Q</original>
    <variation>R</variation>
    <location>
        <position position="755"/>
    </location>
</feature>
<feature type="sequence conflict" description="In Ref. 4; BAF85278." evidence="17" ref="4">
    <original>I</original>
    <variation>F</variation>
    <location>
        <position position="799"/>
    </location>
</feature>
<feature type="sequence conflict" description="In Ref. 1; AAA87565." evidence="17" ref="1">
    <original>G</original>
    <variation>E</variation>
    <location>
        <position position="881"/>
    </location>
</feature>
<feature type="sequence conflict" description="In Ref. 1; AAA87565." evidence="17" ref="1">
    <original>P</original>
    <variation>A</variation>
    <location>
        <position position="969"/>
    </location>
</feature>
<feature type="sequence conflict" description="In Ref. 1; AAA87565." evidence="17" ref="1">
    <original>F</original>
    <variation>S</variation>
    <location>
        <position position="992"/>
    </location>
</feature>
<feature type="helix" evidence="18">
    <location>
        <begin position="793"/>
        <end position="795"/>
    </location>
</feature>
<feature type="strand" evidence="18">
    <location>
        <begin position="796"/>
        <end position="804"/>
    </location>
</feature>
<feature type="strand" evidence="18">
    <location>
        <begin position="806"/>
        <end position="816"/>
    </location>
</feature>
<feature type="strand" evidence="18">
    <location>
        <begin position="823"/>
        <end position="832"/>
    </location>
</feature>
<feature type="helix" evidence="18">
    <location>
        <begin position="837"/>
        <end position="852"/>
    </location>
</feature>
<feature type="strand" evidence="18">
    <location>
        <begin position="861"/>
        <end position="865"/>
    </location>
</feature>
<feature type="strand" evidence="18">
    <location>
        <begin position="867"/>
        <end position="876"/>
    </location>
</feature>
<feature type="strand" evidence="18">
    <location>
        <begin position="879"/>
        <end position="882"/>
    </location>
</feature>
<feature type="helix" evidence="18">
    <location>
        <begin position="883"/>
        <end position="890"/>
    </location>
</feature>
<feature type="helix" evidence="18">
    <location>
        <begin position="904"/>
        <end position="923"/>
    </location>
</feature>
<feature type="helix" evidence="18">
    <location>
        <begin position="933"/>
        <end position="935"/>
    </location>
</feature>
<feature type="strand" evidence="18">
    <location>
        <begin position="936"/>
        <end position="938"/>
    </location>
</feature>
<feature type="strand" evidence="18">
    <location>
        <begin position="944"/>
        <end position="946"/>
    </location>
</feature>
<feature type="turn" evidence="18">
    <location>
        <begin position="952"/>
        <end position="956"/>
    </location>
</feature>
<feature type="helix" evidence="18">
    <location>
        <begin position="957"/>
        <end position="959"/>
    </location>
</feature>
<feature type="strand" evidence="18">
    <location>
        <begin position="961"/>
        <end position="963"/>
    </location>
</feature>
<feature type="strand" evidence="18">
    <location>
        <begin position="966"/>
        <end position="968"/>
    </location>
</feature>
<feature type="helix" evidence="18">
    <location>
        <begin position="970"/>
        <end position="972"/>
    </location>
</feature>
<feature type="helix" evidence="18">
    <location>
        <begin position="975"/>
        <end position="980"/>
    </location>
</feature>
<feature type="helix" evidence="18">
    <location>
        <begin position="985"/>
        <end position="1000"/>
    </location>
</feature>
<feature type="turn" evidence="18">
    <location>
        <begin position="1006"/>
        <end position="1009"/>
    </location>
</feature>
<feature type="helix" evidence="18">
    <location>
        <begin position="1012"/>
        <end position="1020"/>
    </location>
</feature>
<feature type="helix" evidence="18">
    <location>
        <begin position="1034"/>
        <end position="1043"/>
    </location>
</feature>
<feature type="helix" evidence="18">
    <location>
        <begin position="1048"/>
        <end position="1050"/>
    </location>
</feature>
<feature type="helix" evidence="18">
    <location>
        <begin position="1054"/>
        <end position="1062"/>
    </location>
</feature>
<protein>
    <recommendedName>
        <fullName>Inactive tyrosine-protein kinase 7</fullName>
    </recommendedName>
    <alternativeName>
        <fullName>Colon carcinoma kinase 4</fullName>
        <shortName>CCK-4</shortName>
    </alternativeName>
    <alternativeName>
        <fullName>Protein-tyrosine kinase 7</fullName>
    </alternativeName>
    <alternativeName>
        <fullName>Pseudo tyrosine kinase receptor 7</fullName>
    </alternativeName>
    <alternativeName>
        <fullName>Tyrosine-protein kinase-like 7</fullName>
    </alternativeName>
</protein>
<gene>
    <name type="primary">PTK7</name>
    <name type="synonym">CCK4</name>
</gene>
<organism>
    <name type="scientific">Homo sapiens</name>
    <name type="common">Human</name>
    <dbReference type="NCBI Taxonomy" id="9606"/>
    <lineage>
        <taxon>Eukaryota</taxon>
        <taxon>Metazoa</taxon>
        <taxon>Chordata</taxon>
        <taxon>Craniata</taxon>
        <taxon>Vertebrata</taxon>
        <taxon>Euteleostomi</taxon>
        <taxon>Mammalia</taxon>
        <taxon>Eutheria</taxon>
        <taxon>Euarchontoglires</taxon>
        <taxon>Primates</taxon>
        <taxon>Haplorrhini</taxon>
        <taxon>Catarrhini</taxon>
        <taxon>Hominidae</taxon>
        <taxon>Homo</taxon>
    </lineage>
</organism>
<comment type="function">
    <text evidence="8 11 12 13 14">Inactive tyrosine kinase involved in Wnt signaling pathway. Component of both the non-canonical (also known as the Wnt/planar cell polarity signaling) and the canonical Wnt signaling pathway. Functions in cell adhesion, cell migration, cell polarity, proliferation, actin cytoskeleton reorganization and apoptosis. Has a role in embryogenesis, epithelial tissue organization and angiogenesis.</text>
</comment>
<comment type="subunit">
    <text evidence="14">Interacts with CTNNB1.</text>
</comment>
<comment type="interaction">
    <interactant intactId="EBI-2803245">
        <id>Q13308</id>
    </interactant>
    <interactant intactId="EBI-491549">
        <id>P35222</id>
        <label>CTNNB1</label>
    </interactant>
    <organismsDiffer>false</organismsDiffer>
    <experiments>5</experiments>
</comment>
<comment type="interaction">
    <interactant intactId="EBI-2803245">
        <id>Q13308</id>
    </interactant>
    <interactant intactId="EBI-11749135">
        <id>Q8IUG1</id>
        <label>KRTAP1-3</label>
    </interactant>
    <organismsDiffer>false</organismsDiffer>
    <experiments>3</experiments>
</comment>
<comment type="interaction">
    <interactant intactId="EBI-2803245">
        <id>Q13308</id>
    </interactant>
    <interactant intactId="EBI-10171774">
        <id>P60410</id>
        <label>KRTAP10-8</label>
    </interactant>
    <organismsDiffer>false</organismsDiffer>
    <experiments>3</experiments>
</comment>
<comment type="interaction">
    <interactant intactId="EBI-2803245">
        <id>Q13308</id>
    </interactant>
    <interactant intactId="EBI-724076">
        <id>Q99750</id>
        <label>MDFI</label>
    </interactant>
    <organismsDiffer>false</organismsDiffer>
    <experiments>3</experiments>
</comment>
<comment type="interaction">
    <interactant intactId="EBI-2803245">
        <id>Q13308</id>
    </interactant>
    <interactant intactId="EBI-11522433">
        <id>Q5JR59-3</id>
        <label>MTUS2</label>
    </interactant>
    <organismsDiffer>false</organismsDiffer>
    <experiments>3</experiments>
</comment>
<comment type="interaction">
    <interactant intactId="EBI-2803245">
        <id>Q13308</id>
    </interactant>
    <interactant intactId="EBI-22310682">
        <id>P0DPK4</id>
        <label>NOTCH2NLC</label>
    </interactant>
    <organismsDiffer>false</organismsDiffer>
    <experiments>3</experiments>
</comment>
<comment type="subcellular location">
    <subcellularLocation>
        <location evidence="12">Membrane</location>
        <topology evidence="12">Single-pass type I membrane protein</topology>
    </subcellularLocation>
    <subcellularLocation>
        <location evidence="12">Cell junction</location>
    </subcellularLocation>
    <text>Colocalizes with MMP14 at cell junctions. Also localizes at the leading edge of migrating cells.</text>
</comment>
<comment type="alternative products">
    <event type="alternative splicing"/>
    <isoform>
        <id>Q13308-1</id>
        <name>1</name>
        <name>PTK7-1</name>
        <sequence type="displayed"/>
    </isoform>
    <isoform>
        <id>Q13308-2</id>
        <name>2</name>
        <name>PTK7-2</name>
        <sequence type="described" ref="VSP_037182"/>
    </isoform>
    <isoform>
        <id>Q13308-3</id>
        <name>3</name>
        <name>PTK7-3</name>
        <sequence type="described" ref="VSP_037181"/>
    </isoform>
    <isoform>
        <id>Q13308-4</id>
        <name>4</name>
        <name>PTK7-4</name>
        <sequence type="described" ref="VSP_037183"/>
    </isoform>
    <isoform>
        <id>Q13308-5</id>
        <name>5</name>
        <name>PTK7-5</name>
        <sequence type="described" ref="VSP_037184 VSP_037185"/>
    </isoform>
    <isoform>
        <id>Q13308-6</id>
        <name>6</name>
        <sequence type="described" ref="VSP_044775"/>
    </isoform>
</comment>
<comment type="tissue specificity">
    <text>Highly expressed in lung, liver, pancreas, kidney, placenta and melanocytes. Weakly expressed in thyroid gland, ovary, brain, heart and skeletal muscle. Also expressed in erythroleukemia cells. But not expressed in colon.</text>
</comment>
<comment type="induction">
    <text evidence="12">Higher expression in cell lines established from normal non-tumorigenic tissues compared to cell lines established from highly metastatic invasive carcinomas (at protein level).</text>
</comment>
<comment type="domain">
    <text>The protein kinase domain is predicted to be catalytically inactive.</text>
</comment>
<comment type="PTM">
    <text evidence="12">MMP14 cleaves PTK7 between Pro-621 and Leu-622 generating an N-terminal soluble (70 kDa) fragment and a membrane C-terminal (50 kDa) fragment. Proteolysis by MMP14 regulates PTK7 function in non-canonical Wnt signaling pathway.</text>
</comment>
<comment type="miscellaneous">
    <molecule>Isoform 5</molecule>
    <text evidence="17">May be produced at very low levels due to a premature stop codon in the mRNA, leading to nonsense-mediated mRNA decay.</text>
</comment>
<comment type="similarity">
    <text evidence="4">Belongs to the protein kinase superfamily. Tyr protein kinase family. Insulin receptor subfamily.</text>
</comment>
<comment type="online information" name="Atlas of Genetics and Cytogenetics in Oncology and Haematology">
    <link uri="https://atlasgeneticsoncology.org/gene/41901/PTK7"/>
</comment>
<name>PTK7_HUMAN</name>
<reference key="1">
    <citation type="journal article" date="1995" name="Oncogene">
        <title>Colon carcinoma kinase-4 defines a new subclass of the receptor tyrosine kinase family.</title>
        <authorList>
            <person name="Mossie K."/>
            <person name="Jallal B."/>
            <person name="Alves F."/>
            <person name="Sures I."/>
            <person name="Plowman G.D."/>
            <person name="Ullrich A."/>
        </authorList>
    </citation>
    <scope>NUCLEOTIDE SEQUENCE [MRNA] (ISOFORM 1)</scope>
    <source>
        <tissue>Colon carcinoma</tissue>
        <tissue>Placenta</tissue>
    </source>
</reference>
<reference key="2">
    <citation type="journal article" date="1996" name="J. Biochem.">
        <title>Characterization of the human full-length PTK7 cDNA encoding a receptor protein tyrosine kinase-like molecule closely related to chick KLG.</title>
        <authorList>
            <person name="Park S.-K."/>
            <person name="Lee H.-S."/>
            <person name="Lee S.-T."/>
        </authorList>
    </citation>
    <scope>NUCLEOTIDE SEQUENCE [MRNA] (ISOFORM 1)</scope>
    <source>
        <tissue>Fibroblast</tissue>
    </source>
</reference>
<reference key="3">
    <citation type="journal article" date="2002" name="Biochim. Biophys. Acta">
        <title>Organization of the human PTK7 gene encoding a receptor protein tyrosine kinase-like molecule and alternative splicing of its mRNA.</title>
        <authorList>
            <person name="Jung J.-W."/>
            <person name="Ji A.-R."/>
            <person name="Lee J."/>
            <person name="Kim U.-J."/>
            <person name="Lee S.-T."/>
        </authorList>
    </citation>
    <scope>NUCLEOTIDE SEQUENCE [GENOMIC DNA]</scope>
    <scope>NUCLEOTIDE SEQUENCE [MRNA] (ISOFORMS 1; 2; 3; 4 AND 5)</scope>
    <source>
        <tissue>Testis</tissue>
    </source>
</reference>
<reference key="4">
    <citation type="journal article" date="2004" name="Nat. Genet.">
        <title>Complete sequencing and characterization of 21,243 full-length human cDNAs.</title>
        <authorList>
            <person name="Ota T."/>
            <person name="Suzuki Y."/>
            <person name="Nishikawa T."/>
            <person name="Otsuki T."/>
            <person name="Sugiyama T."/>
            <person name="Irie R."/>
            <person name="Wakamatsu A."/>
            <person name="Hayashi K."/>
            <person name="Sato H."/>
            <person name="Nagai K."/>
            <person name="Kimura K."/>
            <person name="Makita H."/>
            <person name="Sekine M."/>
            <person name="Obayashi M."/>
            <person name="Nishi T."/>
            <person name="Shibahara T."/>
            <person name="Tanaka T."/>
            <person name="Ishii S."/>
            <person name="Yamamoto J."/>
            <person name="Saito K."/>
            <person name="Kawai Y."/>
            <person name="Isono Y."/>
            <person name="Nakamura Y."/>
            <person name="Nagahari K."/>
            <person name="Murakami K."/>
            <person name="Yasuda T."/>
            <person name="Iwayanagi T."/>
            <person name="Wagatsuma M."/>
            <person name="Shiratori A."/>
            <person name="Sudo H."/>
            <person name="Hosoiri T."/>
            <person name="Kaku Y."/>
            <person name="Kodaira H."/>
            <person name="Kondo H."/>
            <person name="Sugawara M."/>
            <person name="Takahashi M."/>
            <person name="Kanda K."/>
            <person name="Yokoi T."/>
            <person name="Furuya T."/>
            <person name="Kikkawa E."/>
            <person name="Omura Y."/>
            <person name="Abe K."/>
            <person name="Kamihara K."/>
            <person name="Katsuta N."/>
            <person name="Sato K."/>
            <person name="Tanikawa M."/>
            <person name="Yamazaki M."/>
            <person name="Ninomiya K."/>
            <person name="Ishibashi T."/>
            <person name="Yamashita H."/>
            <person name="Murakawa K."/>
            <person name="Fujimori K."/>
            <person name="Tanai H."/>
            <person name="Kimata M."/>
            <person name="Watanabe M."/>
            <person name="Hiraoka S."/>
            <person name="Chiba Y."/>
            <person name="Ishida S."/>
            <person name="Ono Y."/>
            <person name="Takiguchi S."/>
            <person name="Watanabe S."/>
            <person name="Yosida M."/>
            <person name="Hotuta T."/>
            <person name="Kusano J."/>
            <person name="Kanehori K."/>
            <person name="Takahashi-Fujii A."/>
            <person name="Hara H."/>
            <person name="Tanase T.-O."/>
            <person name="Nomura Y."/>
            <person name="Togiya S."/>
            <person name="Komai F."/>
            <person name="Hara R."/>
            <person name="Takeuchi K."/>
            <person name="Arita M."/>
            <person name="Imose N."/>
            <person name="Musashino K."/>
            <person name="Yuuki H."/>
            <person name="Oshima A."/>
            <person name="Sasaki N."/>
            <person name="Aotsuka S."/>
            <person name="Yoshikawa Y."/>
            <person name="Matsunawa H."/>
            <person name="Ichihara T."/>
            <person name="Shiohata N."/>
            <person name="Sano S."/>
            <person name="Moriya S."/>
            <person name="Momiyama H."/>
            <person name="Satoh N."/>
            <person name="Takami S."/>
            <person name="Terashima Y."/>
            <person name="Suzuki O."/>
            <person name="Nakagawa S."/>
            <person name="Senoh A."/>
            <person name="Mizoguchi H."/>
            <person name="Goto Y."/>
            <person name="Shimizu F."/>
            <person name="Wakebe H."/>
            <person name="Hishigaki H."/>
            <person name="Watanabe T."/>
            <person name="Sugiyama A."/>
            <person name="Takemoto M."/>
            <person name="Kawakami B."/>
            <person name="Yamazaki M."/>
            <person name="Watanabe K."/>
            <person name="Kumagai A."/>
            <person name="Itakura S."/>
            <person name="Fukuzumi Y."/>
            <person name="Fujimori Y."/>
            <person name="Komiyama M."/>
            <person name="Tashiro H."/>
            <person name="Tanigami A."/>
            <person name="Fujiwara T."/>
            <person name="Ono T."/>
            <person name="Yamada K."/>
            <person name="Fujii Y."/>
            <person name="Ozaki K."/>
            <person name="Hirao M."/>
            <person name="Ohmori Y."/>
            <person name="Kawabata A."/>
            <person name="Hikiji T."/>
            <person name="Kobatake N."/>
            <person name="Inagaki H."/>
            <person name="Ikema Y."/>
            <person name="Okamoto S."/>
            <person name="Okitani R."/>
            <person name="Kawakami T."/>
            <person name="Noguchi S."/>
            <person name="Itoh T."/>
            <person name="Shigeta K."/>
            <person name="Senba T."/>
            <person name="Matsumura K."/>
            <person name="Nakajima Y."/>
            <person name="Mizuno T."/>
            <person name="Morinaga M."/>
            <person name="Sasaki M."/>
            <person name="Togashi T."/>
            <person name="Oyama M."/>
            <person name="Hata H."/>
            <person name="Watanabe M."/>
            <person name="Komatsu T."/>
            <person name="Mizushima-Sugano J."/>
            <person name="Satoh T."/>
            <person name="Shirai Y."/>
            <person name="Takahashi Y."/>
            <person name="Nakagawa K."/>
            <person name="Okumura K."/>
            <person name="Nagase T."/>
            <person name="Nomura N."/>
            <person name="Kikuchi H."/>
            <person name="Masuho Y."/>
            <person name="Yamashita R."/>
            <person name="Nakai K."/>
            <person name="Yada T."/>
            <person name="Nakamura Y."/>
            <person name="Ohara O."/>
            <person name="Isogai T."/>
            <person name="Sugano S."/>
        </authorList>
    </citation>
    <scope>NUCLEOTIDE SEQUENCE [LARGE SCALE MRNA] (ISOFORMS 1; 2 AND 6)</scope>
    <source>
        <tissue>Testis</tissue>
        <tissue>Tongue</tissue>
    </source>
</reference>
<reference key="5">
    <citation type="journal article" date="2003" name="Nature">
        <title>The DNA sequence and analysis of human chromosome 6.</title>
        <authorList>
            <person name="Mungall A.J."/>
            <person name="Palmer S.A."/>
            <person name="Sims S.K."/>
            <person name="Edwards C.A."/>
            <person name="Ashurst J.L."/>
            <person name="Wilming L."/>
            <person name="Jones M.C."/>
            <person name="Horton R."/>
            <person name="Hunt S.E."/>
            <person name="Scott C.E."/>
            <person name="Gilbert J.G.R."/>
            <person name="Clamp M.E."/>
            <person name="Bethel G."/>
            <person name="Milne S."/>
            <person name="Ainscough R."/>
            <person name="Almeida J.P."/>
            <person name="Ambrose K.D."/>
            <person name="Andrews T.D."/>
            <person name="Ashwell R.I.S."/>
            <person name="Babbage A.K."/>
            <person name="Bagguley C.L."/>
            <person name="Bailey J."/>
            <person name="Banerjee R."/>
            <person name="Barker D.J."/>
            <person name="Barlow K.F."/>
            <person name="Bates K."/>
            <person name="Beare D.M."/>
            <person name="Beasley H."/>
            <person name="Beasley O."/>
            <person name="Bird C.P."/>
            <person name="Blakey S.E."/>
            <person name="Bray-Allen S."/>
            <person name="Brook J."/>
            <person name="Brown A.J."/>
            <person name="Brown J.Y."/>
            <person name="Burford D.C."/>
            <person name="Burrill W."/>
            <person name="Burton J."/>
            <person name="Carder C."/>
            <person name="Carter N.P."/>
            <person name="Chapman J.C."/>
            <person name="Clark S.Y."/>
            <person name="Clark G."/>
            <person name="Clee C.M."/>
            <person name="Clegg S."/>
            <person name="Cobley V."/>
            <person name="Collier R.E."/>
            <person name="Collins J.E."/>
            <person name="Colman L.K."/>
            <person name="Corby N.R."/>
            <person name="Coville G.J."/>
            <person name="Culley K.M."/>
            <person name="Dhami P."/>
            <person name="Davies J."/>
            <person name="Dunn M."/>
            <person name="Earthrowl M.E."/>
            <person name="Ellington A.E."/>
            <person name="Evans K.A."/>
            <person name="Faulkner L."/>
            <person name="Francis M.D."/>
            <person name="Frankish A."/>
            <person name="Frankland J."/>
            <person name="French L."/>
            <person name="Garner P."/>
            <person name="Garnett J."/>
            <person name="Ghori M.J."/>
            <person name="Gilby L.M."/>
            <person name="Gillson C.J."/>
            <person name="Glithero R.J."/>
            <person name="Grafham D.V."/>
            <person name="Grant M."/>
            <person name="Gribble S."/>
            <person name="Griffiths C."/>
            <person name="Griffiths M.N.D."/>
            <person name="Hall R."/>
            <person name="Halls K.S."/>
            <person name="Hammond S."/>
            <person name="Harley J.L."/>
            <person name="Hart E.A."/>
            <person name="Heath P.D."/>
            <person name="Heathcott R."/>
            <person name="Holmes S.J."/>
            <person name="Howden P.J."/>
            <person name="Howe K.L."/>
            <person name="Howell G.R."/>
            <person name="Huckle E."/>
            <person name="Humphray S.J."/>
            <person name="Humphries M.D."/>
            <person name="Hunt A.R."/>
            <person name="Johnson C.M."/>
            <person name="Joy A.A."/>
            <person name="Kay M."/>
            <person name="Keenan S.J."/>
            <person name="Kimberley A.M."/>
            <person name="King A."/>
            <person name="Laird G.K."/>
            <person name="Langford C."/>
            <person name="Lawlor S."/>
            <person name="Leongamornlert D.A."/>
            <person name="Leversha M."/>
            <person name="Lloyd C.R."/>
            <person name="Lloyd D.M."/>
            <person name="Loveland J.E."/>
            <person name="Lovell J."/>
            <person name="Martin S."/>
            <person name="Mashreghi-Mohammadi M."/>
            <person name="Maslen G.L."/>
            <person name="Matthews L."/>
            <person name="McCann O.T."/>
            <person name="McLaren S.J."/>
            <person name="McLay K."/>
            <person name="McMurray A."/>
            <person name="Moore M.J.F."/>
            <person name="Mullikin J.C."/>
            <person name="Niblett D."/>
            <person name="Nickerson T."/>
            <person name="Novik K.L."/>
            <person name="Oliver K."/>
            <person name="Overton-Larty E.K."/>
            <person name="Parker A."/>
            <person name="Patel R."/>
            <person name="Pearce A.V."/>
            <person name="Peck A.I."/>
            <person name="Phillimore B.J.C.T."/>
            <person name="Phillips S."/>
            <person name="Plumb R.W."/>
            <person name="Porter K.M."/>
            <person name="Ramsey Y."/>
            <person name="Ranby S.A."/>
            <person name="Rice C.M."/>
            <person name="Ross M.T."/>
            <person name="Searle S.M."/>
            <person name="Sehra H.K."/>
            <person name="Sheridan E."/>
            <person name="Skuce C.D."/>
            <person name="Smith S."/>
            <person name="Smith M."/>
            <person name="Spraggon L."/>
            <person name="Squares S.L."/>
            <person name="Steward C.A."/>
            <person name="Sycamore N."/>
            <person name="Tamlyn-Hall G."/>
            <person name="Tester J."/>
            <person name="Theaker A.J."/>
            <person name="Thomas D.W."/>
            <person name="Thorpe A."/>
            <person name="Tracey A."/>
            <person name="Tromans A."/>
            <person name="Tubby B."/>
            <person name="Wall M."/>
            <person name="Wallis J.M."/>
            <person name="West A.P."/>
            <person name="White S.S."/>
            <person name="Whitehead S.L."/>
            <person name="Whittaker H."/>
            <person name="Wild A."/>
            <person name="Willey D.J."/>
            <person name="Wilmer T.E."/>
            <person name="Wood J.M."/>
            <person name="Wray P.W."/>
            <person name="Wyatt J.C."/>
            <person name="Young L."/>
            <person name="Younger R.M."/>
            <person name="Bentley D.R."/>
            <person name="Coulson A."/>
            <person name="Durbin R.M."/>
            <person name="Hubbard T."/>
            <person name="Sulston J.E."/>
            <person name="Dunham I."/>
            <person name="Rogers J."/>
            <person name="Beck S."/>
        </authorList>
    </citation>
    <scope>NUCLEOTIDE SEQUENCE [LARGE SCALE GENOMIC DNA]</scope>
</reference>
<reference key="6">
    <citation type="submission" date="2005-07" db="EMBL/GenBank/DDBJ databases">
        <authorList>
            <person name="Mural R.J."/>
            <person name="Istrail S."/>
            <person name="Sutton G.G."/>
            <person name="Florea L."/>
            <person name="Halpern A.L."/>
            <person name="Mobarry C.M."/>
            <person name="Lippert R."/>
            <person name="Walenz B."/>
            <person name="Shatkay H."/>
            <person name="Dew I."/>
            <person name="Miller J.R."/>
            <person name="Flanigan M.J."/>
            <person name="Edwards N.J."/>
            <person name="Bolanos R."/>
            <person name="Fasulo D."/>
            <person name="Halldorsson B.V."/>
            <person name="Hannenhalli S."/>
            <person name="Turner R."/>
            <person name="Yooseph S."/>
            <person name="Lu F."/>
            <person name="Nusskern D.R."/>
            <person name="Shue B.C."/>
            <person name="Zheng X.H."/>
            <person name="Zhong F."/>
            <person name="Delcher A.L."/>
            <person name="Huson D.H."/>
            <person name="Kravitz S.A."/>
            <person name="Mouchard L."/>
            <person name="Reinert K."/>
            <person name="Remington K.A."/>
            <person name="Clark A.G."/>
            <person name="Waterman M.S."/>
            <person name="Eichler E.E."/>
            <person name="Adams M.D."/>
            <person name="Hunkapiller M.W."/>
            <person name="Myers E.W."/>
            <person name="Venter J.C."/>
        </authorList>
    </citation>
    <scope>NUCLEOTIDE SEQUENCE [LARGE SCALE GENOMIC DNA]</scope>
</reference>
<reference key="7">
    <citation type="journal article" date="2004" name="Genome Res.">
        <title>The status, quality, and expansion of the NIH full-length cDNA project: the Mammalian Gene Collection (MGC).</title>
        <authorList>
            <consortium name="The MGC Project Team"/>
        </authorList>
    </citation>
    <scope>NUCLEOTIDE SEQUENCE [LARGE SCALE MRNA] (ISOFORM 1)</scope>
    <source>
        <tissue>Placenta</tissue>
    </source>
</reference>
<reference key="8">
    <citation type="journal article" date="2003" name="Nat. Biotechnol.">
        <title>Identification and quantification of N-linked glycoproteins using hydrazide chemistry, stable isotope labeling and mass spectrometry.</title>
        <authorList>
            <person name="Zhang H."/>
            <person name="Li X.-J."/>
            <person name="Martin D.B."/>
            <person name="Aebersold R."/>
        </authorList>
    </citation>
    <scope>GLYCOSYLATION AT ASN-646</scope>
</reference>
<reference key="9">
    <citation type="journal article" date="2009" name="J. Proteome Res.">
        <title>Glycoproteomics analysis of human liver tissue by combination of multiple enzyme digestion and hydrazide chemistry.</title>
        <authorList>
            <person name="Chen R."/>
            <person name="Jiang X."/>
            <person name="Sun D."/>
            <person name="Han G."/>
            <person name="Wang F."/>
            <person name="Ye M."/>
            <person name="Wang L."/>
            <person name="Zou H."/>
        </authorList>
    </citation>
    <scope>GLYCOSYLATION [LARGE SCALE ANALYSIS] AT ASN-646</scope>
    <source>
        <tissue>Liver</tissue>
    </source>
</reference>
<reference key="10">
    <citation type="journal article" date="2008" name="Biochem. Biophys. Res. Commun.">
        <title>Soluble PTK7 inhibits tube formation, migration, and invasion of endothelial cells and angiogenesis.</title>
        <authorList>
            <person name="Shin W.-S."/>
            <person name="Maeng Y.-S."/>
            <person name="Jung J.-W."/>
            <person name="Min J.-K."/>
            <person name="Kwon Y.-G."/>
            <person name="Lee S.-T."/>
        </authorList>
    </citation>
    <scope>FUNCTION</scope>
</reference>
<reference key="11">
    <citation type="journal article" date="2009" name="Nat. Biotechnol.">
        <title>Mass-spectrometric identification and relative quantification of N-linked cell surface glycoproteins.</title>
        <authorList>
            <person name="Wollscheid B."/>
            <person name="Bausch-Fluck D."/>
            <person name="Henderson C."/>
            <person name="O'Brien R."/>
            <person name="Bibel M."/>
            <person name="Schiess R."/>
            <person name="Aebersold R."/>
            <person name="Watts J.D."/>
        </authorList>
    </citation>
    <scope>GLYCOSYLATION [LARGE SCALE ANALYSIS] AT ASN-116; ASN-175; ASN-268 AND ASN-283</scope>
    <source>
        <tissue>Leukemic T-cell</tissue>
    </source>
</reference>
<reference key="12">
    <citation type="journal article" date="2010" name="Blood">
        <title>The cell polarity PTK7 receptor acts as a modulator of the chemotherapeutic response in acute myeloid leukemia and impairs clinical outcome.</title>
        <authorList>
            <person name="Prebet T."/>
            <person name="Lhoumeau A.-C."/>
            <person name="Arnoulet C."/>
            <person name="Aulas A."/>
            <person name="Marchetto S."/>
            <person name="Audebert S."/>
            <person name="Puppo F."/>
            <person name="Chabannon C."/>
            <person name="Sainty D."/>
            <person name="Santoni M.-J."/>
            <person name="Sebbagh M."/>
            <person name="Summerour V."/>
            <person name="Huon Y."/>
            <person name="Shin W.-S."/>
            <person name="Lee S.-T."/>
            <person name="Esterni B."/>
            <person name="Vey N."/>
            <person name="Borg J.-P."/>
        </authorList>
    </citation>
    <scope>FUNCTION</scope>
</reference>
<reference key="13">
    <citation type="journal article" date="2010" name="J. Biol. Chem.">
        <title>The Wnt/planar cell polarity protein-tyrosine kinase-7 (PTK7) is a highly efficient proteolytic target of membrane type-1 matrix metalloproteinase: implications in cancer and embryogenesis.</title>
        <authorList>
            <person name="Golubkov V.S."/>
            <person name="Chekanov A.V."/>
            <person name="Cieplak P."/>
            <person name="Aleshin A.E."/>
            <person name="Chernov A.V."/>
            <person name="Zhu W."/>
            <person name="Radichev I.A."/>
            <person name="Zhang D."/>
            <person name="Dong P.D."/>
            <person name="Strongin A.Y."/>
        </authorList>
    </citation>
    <scope>FUNCTION</scope>
    <scope>SUBCELLULAR LOCATION</scope>
    <scope>INDUCTION</scope>
    <scope>CLEAVAGE</scope>
    <scope>MUTAGENESIS OF LEU-622; MET-641 AND MET-701</scope>
</reference>
<reference key="14">
    <citation type="journal article" date="2010" name="PLoS ONE">
        <title>Silencing of PTK7 in colon cancer cells: caspase-10-dependent apoptosis via mitochondrial pathway.</title>
        <authorList>
            <person name="Meng L."/>
            <person name="Sefah K."/>
            <person name="O'Donoghue M.B."/>
            <person name="Zhu G."/>
            <person name="Shangguan D."/>
            <person name="Noorali A."/>
            <person name="Chen Y."/>
            <person name="Zhou L."/>
            <person name="Tan W."/>
        </authorList>
    </citation>
    <scope>FUNCTION</scope>
</reference>
<reference key="15">
    <citation type="journal article" date="2011" name="BMC Syst. Biol.">
        <title>Initial characterization of the human central proteome.</title>
        <authorList>
            <person name="Burkard T.R."/>
            <person name="Planyavsky M."/>
            <person name="Kaupe I."/>
            <person name="Breitwieser F.P."/>
            <person name="Buerckstuemmer T."/>
            <person name="Bennett K.L."/>
            <person name="Superti-Furga G."/>
            <person name="Colinge J."/>
        </authorList>
    </citation>
    <scope>IDENTIFICATION BY MASS SPECTROMETRY [LARGE SCALE ANALYSIS]</scope>
</reference>
<reference key="16">
    <citation type="journal article" date="2011" name="EMBO Rep.">
        <title>Protein tyrosine kinase 7 has a conserved role in Wnt/beta-catenin canonical signalling.</title>
        <authorList>
            <person name="Puppo F."/>
            <person name="Thome V."/>
            <person name="Lhoumeau A.-C."/>
            <person name="Cibois M."/>
            <person name="Gangar A."/>
            <person name="Lembo F."/>
            <person name="Belotti E."/>
            <person name="Marchetto S."/>
            <person name="Lecine P."/>
            <person name="Prebet T."/>
            <person name="Sebbagh M."/>
            <person name="Shin W.-S."/>
            <person name="Lee S.-T."/>
            <person name="Kodjabachian L."/>
            <person name="Borg J.-P."/>
        </authorList>
    </citation>
    <scope>FUNCTION</scope>
    <scope>INTERACTION WITH CTNNB1</scope>
    <scope>REGION</scope>
</reference>
<reference key="17">
    <citation type="journal article" date="2007" name="Nature">
        <title>Patterns of somatic mutation in human cancer genomes.</title>
        <authorList>
            <person name="Greenman C."/>
            <person name="Stephens P."/>
            <person name="Smith R."/>
            <person name="Dalgliesh G.L."/>
            <person name="Hunter C."/>
            <person name="Bignell G."/>
            <person name="Davies H."/>
            <person name="Teague J."/>
            <person name="Butler A."/>
            <person name="Stevens C."/>
            <person name="Edkins S."/>
            <person name="O'Meara S."/>
            <person name="Vastrik I."/>
            <person name="Schmidt E.E."/>
            <person name="Avis T."/>
            <person name="Barthorpe S."/>
            <person name="Bhamra G."/>
            <person name="Buck G."/>
            <person name="Choudhury B."/>
            <person name="Clements J."/>
            <person name="Cole J."/>
            <person name="Dicks E."/>
            <person name="Forbes S."/>
            <person name="Gray K."/>
            <person name="Halliday K."/>
            <person name="Harrison R."/>
            <person name="Hills K."/>
            <person name="Hinton J."/>
            <person name="Jenkinson A."/>
            <person name="Jones D."/>
            <person name="Menzies A."/>
            <person name="Mironenko T."/>
            <person name="Perry J."/>
            <person name="Raine K."/>
            <person name="Richardson D."/>
            <person name="Shepherd R."/>
            <person name="Small A."/>
            <person name="Tofts C."/>
            <person name="Varian J."/>
            <person name="Webb T."/>
            <person name="West S."/>
            <person name="Widaa S."/>
            <person name="Yates A."/>
            <person name="Cahill D.P."/>
            <person name="Louis D.N."/>
            <person name="Goldstraw P."/>
            <person name="Nicholson A.G."/>
            <person name="Brasseur F."/>
            <person name="Looijenga L."/>
            <person name="Weber B.L."/>
            <person name="Chiew Y.-E."/>
            <person name="DeFazio A."/>
            <person name="Greaves M.F."/>
            <person name="Green A.R."/>
            <person name="Campbell P."/>
            <person name="Birney E."/>
            <person name="Easton D.F."/>
            <person name="Chenevix-Trench G."/>
            <person name="Tan M.-H."/>
            <person name="Khoo S.K."/>
            <person name="Teh B.T."/>
            <person name="Yuen S.T."/>
            <person name="Leung S.Y."/>
            <person name="Wooster R."/>
            <person name="Futreal P.A."/>
            <person name="Stratton M.R."/>
        </authorList>
    </citation>
    <scope>VARIANTS [LARGE SCALE ANALYSIS] HIS-276; SER-410; ASP-745; GLN-766; VAL-777; ARG-783; VAL-933; THR-1029 AND GLN-1038</scope>
</reference>
<sequence>MGAARGSPARPRRLPLLSVLLLPLLGGTQTAIVFIKQPSSQDALQGRRALLRCEVEAPGPVHVYWLLDGAPVQDTERRFAQGSSLSFAAVDRLQDSGTFQCVARDDVTGEEARSANASFNIKWIEAGPVVLKHPASEAEIQPQTQVTLRCHIDGHPRPTYQWFRDGTPLSDGQSNHTVSSKERNLTLRPAGPEHSGLYSCCAHSAFGQACSSQNFTLSIADESFARVVLAPQDVVVARYEEAMFHCQFSAQPPPSLQWLFEDETPITNRSRPPHLRRATVFANGSLLLTQVRPRNAGIYRCIGQGQRGPPIILEATLHLAEIEDMPLFEPRVFTAGSEERVTCLPPKGLPEPSVWWEHAGVRLPTHGRVYQKGHELVLANIAESDAGVYTCHAANLAGQRRQDVNITVATVPSWLKKPQDSQLEEGKPGYLDCLTQATPKPTVVWYRNQMLISEDSRFEVFKNGTLRINSVEVYDGTWYRCMSSTPAGSIEAQARVQVLEKLKFTPPPQPQQCMEFDKEATVPCSATGREKPTIKWERADGSSLPEWVTDNAGTLHFARVTRDDAGNYTCIASNGPQGQIRAHVQLTVAVFITFKVEPERTTVYQGHTALLQCEAQGDPKPLIQWKGKDRILDPTKLGPRMHIFQNGSLVIHDVAPEDSGRYTCIAGNSCNIKHTEAPLYVVDKPVPEESEGPGSPPPYKMIQTIGLSVGAAVAYIIAVLGLMFYCKKRCKAKRLQKQPEGEEPEMECLNGGPLQNGQPSAEIQEEVALTSLGSGPAATNKRHSTSDKMHFPRSSLQPITTLGKSEFGEVFLAKAQGLEEGVAETLVLVKSLQSKDEQQQLDFRRELEMFGKLNHANVVRLLGLCREAEPHYMVLEYVDLGDLKQFLRISKSKDEKLKSQPLSTKQKVALCTQVALGMEHLSNNRFVHKDLAARNCLVSAQRQVKVSALGLSKDVYNSEYYHFRQAWVPLRWMSPEAILEGDFSTKSDVWAFGVLMWEVFTHGEMPHGGQADDEVLADLQAGKARLPQPEGCPSKLYRLMQRCWALSPKDRPSFSEIASALGDSTVDSKP</sequence>
<dbReference type="EMBL" id="U33635">
    <property type="protein sequence ID" value="AAA87565.1"/>
    <property type="molecule type" value="mRNA"/>
</dbReference>
<dbReference type="EMBL" id="U40271">
    <property type="protein sequence ID" value="AAC50484.2"/>
    <property type="molecule type" value="mRNA"/>
</dbReference>
<dbReference type="EMBL" id="AF447176">
    <property type="protein sequence ID" value="AAL39062.1"/>
    <property type="molecule type" value="Genomic_DNA"/>
</dbReference>
<dbReference type="EMBL" id="AF447157">
    <property type="protein sequence ID" value="AAL39062.1"/>
    <property type="status" value="JOINED"/>
    <property type="molecule type" value="Genomic_DNA"/>
</dbReference>
<dbReference type="EMBL" id="AF447158">
    <property type="protein sequence ID" value="AAL39062.1"/>
    <property type="status" value="JOINED"/>
    <property type="molecule type" value="Genomic_DNA"/>
</dbReference>
<dbReference type="EMBL" id="AF447162">
    <property type="protein sequence ID" value="AAL39062.1"/>
    <property type="status" value="JOINED"/>
    <property type="molecule type" value="Genomic_DNA"/>
</dbReference>
<dbReference type="EMBL" id="AF447164">
    <property type="protein sequence ID" value="AAL39062.1"/>
    <property type="status" value="JOINED"/>
    <property type="molecule type" value="Genomic_DNA"/>
</dbReference>
<dbReference type="EMBL" id="AF447167">
    <property type="protein sequence ID" value="AAL39062.1"/>
    <property type="status" value="JOINED"/>
    <property type="molecule type" value="Genomic_DNA"/>
</dbReference>
<dbReference type="EMBL" id="AF447170">
    <property type="protein sequence ID" value="AAL39062.1"/>
    <property type="status" value="JOINED"/>
    <property type="molecule type" value="Genomic_DNA"/>
</dbReference>
<dbReference type="EMBL" id="AF447171">
    <property type="protein sequence ID" value="AAL39062.1"/>
    <property type="status" value="JOINED"/>
    <property type="molecule type" value="Genomic_DNA"/>
</dbReference>
<dbReference type="EMBL" id="AF447173">
    <property type="protein sequence ID" value="AAL39062.1"/>
    <property type="status" value="JOINED"/>
    <property type="molecule type" value="Genomic_DNA"/>
</dbReference>
<dbReference type="EMBL" id="AF447174">
    <property type="protein sequence ID" value="AAL39062.1"/>
    <property type="status" value="JOINED"/>
    <property type="molecule type" value="Genomic_DNA"/>
</dbReference>
<dbReference type="EMBL" id="AF447175">
    <property type="protein sequence ID" value="AAL39062.1"/>
    <property type="status" value="JOINED"/>
    <property type="molecule type" value="Genomic_DNA"/>
</dbReference>
<dbReference type="EMBL" id="AF531868">
    <property type="protein sequence ID" value="AAN04862.1"/>
    <property type="molecule type" value="mRNA"/>
</dbReference>
<dbReference type="EMBL" id="AF531869">
    <property type="protein sequence ID" value="AAN04863.1"/>
    <property type="molecule type" value="mRNA"/>
</dbReference>
<dbReference type="EMBL" id="AF531870">
    <property type="protein sequence ID" value="AAN04864.1"/>
    <property type="molecule type" value="mRNA"/>
</dbReference>
<dbReference type="EMBL" id="AF531871">
    <property type="protein sequence ID" value="AAN04865.1"/>
    <property type="molecule type" value="mRNA"/>
</dbReference>
<dbReference type="EMBL" id="AF531872">
    <property type="protein sequence ID" value="AAN04866.1"/>
    <property type="molecule type" value="mRNA"/>
</dbReference>
<dbReference type="EMBL" id="AK291016">
    <property type="protein sequence ID" value="BAF83705.1"/>
    <property type="molecule type" value="mRNA"/>
</dbReference>
<dbReference type="EMBL" id="AK292589">
    <property type="protein sequence ID" value="BAF85278.1"/>
    <property type="molecule type" value="mRNA"/>
</dbReference>
<dbReference type="EMBL" id="AK296953">
    <property type="protein sequence ID" value="BAH12463.1"/>
    <property type="molecule type" value="mRNA"/>
</dbReference>
<dbReference type="EMBL" id="AL355385">
    <property type="status" value="NOT_ANNOTATED_CDS"/>
    <property type="molecule type" value="Genomic_DNA"/>
</dbReference>
<dbReference type="EMBL" id="CH471081">
    <property type="protein sequence ID" value="EAX04154.1"/>
    <property type="molecule type" value="Genomic_DNA"/>
</dbReference>
<dbReference type="EMBL" id="CH471081">
    <property type="protein sequence ID" value="EAX04155.1"/>
    <property type="molecule type" value="Genomic_DNA"/>
</dbReference>
<dbReference type="EMBL" id="CH471081">
    <property type="protein sequence ID" value="EAX04156.1"/>
    <property type="molecule type" value="Genomic_DNA"/>
</dbReference>
<dbReference type="EMBL" id="CH471081">
    <property type="protein sequence ID" value="EAX04158.1"/>
    <property type="molecule type" value="Genomic_DNA"/>
</dbReference>
<dbReference type="EMBL" id="CH471081">
    <property type="protein sequence ID" value="EAX04160.1"/>
    <property type="molecule type" value="Genomic_DNA"/>
</dbReference>
<dbReference type="EMBL" id="BC071557">
    <property type="protein sequence ID" value="AAH71557.1"/>
    <property type="molecule type" value="mRNA"/>
</dbReference>
<dbReference type="CCDS" id="CCDS4884.1">
    <molecule id="Q13308-1"/>
</dbReference>
<dbReference type="CCDS" id="CCDS4885.1">
    <molecule id="Q13308-2"/>
</dbReference>
<dbReference type="CCDS" id="CCDS4886.1">
    <molecule id="Q13308-3"/>
</dbReference>
<dbReference type="CCDS" id="CCDS4887.1">
    <molecule id="Q13308-4"/>
</dbReference>
<dbReference type="CCDS" id="CCDS59021.1">
    <molecule id="Q13308-6"/>
</dbReference>
<dbReference type="PIR" id="JC4593">
    <property type="entry name" value="JC4593"/>
</dbReference>
<dbReference type="RefSeq" id="NP_001257327.1">
    <molecule id="Q13308-6"/>
    <property type="nucleotide sequence ID" value="NM_001270398.2"/>
</dbReference>
<dbReference type="RefSeq" id="NP_002812.2">
    <molecule id="Q13308-1"/>
    <property type="nucleotide sequence ID" value="NM_002821.4"/>
</dbReference>
<dbReference type="RefSeq" id="NP_690619.1">
    <molecule id="Q13308-2"/>
    <property type="nucleotide sequence ID" value="NM_152880.4"/>
</dbReference>
<dbReference type="RefSeq" id="NP_690620.1">
    <molecule id="Q13308-3"/>
    <property type="nucleotide sequence ID" value="NM_152881.4"/>
</dbReference>
<dbReference type="RefSeq" id="NP_690621.1">
    <molecule id="Q13308-4"/>
    <property type="nucleotide sequence ID" value="NM_152882.4"/>
</dbReference>
<dbReference type="PDB" id="6VG3">
    <property type="method" value="X-ray"/>
    <property type="resolution" value="1.95 A"/>
    <property type="chains" value="A/B/C=774-1069"/>
</dbReference>
<dbReference type="PDBsum" id="6VG3"/>
<dbReference type="SMR" id="Q13308"/>
<dbReference type="BioGRID" id="111721">
    <property type="interactions" value="145"/>
</dbReference>
<dbReference type="FunCoup" id="Q13308">
    <property type="interactions" value="541"/>
</dbReference>
<dbReference type="IntAct" id="Q13308">
    <property type="interactions" value="82"/>
</dbReference>
<dbReference type="MINT" id="Q13308"/>
<dbReference type="STRING" id="9606.ENSP00000418754"/>
<dbReference type="GlyConnect" id="655">
    <property type="glycosylation" value="40 N-Linked glycans (6 sites)"/>
</dbReference>
<dbReference type="GlyCosmos" id="Q13308">
    <property type="glycosylation" value="10 sites, 46 glycans"/>
</dbReference>
<dbReference type="GlyGen" id="Q13308">
    <property type="glycosylation" value="13 sites, 74 N-linked glycans (8 sites), 2 O-linked glycans (3 sites)"/>
</dbReference>
<dbReference type="iPTMnet" id="Q13308"/>
<dbReference type="MetOSite" id="Q13308"/>
<dbReference type="PhosphoSitePlus" id="Q13308"/>
<dbReference type="SwissPalm" id="Q13308"/>
<dbReference type="BioMuta" id="PTK7"/>
<dbReference type="DMDM" id="116242736"/>
<dbReference type="jPOST" id="Q13308"/>
<dbReference type="MassIVE" id="Q13308"/>
<dbReference type="PaxDb" id="9606-ENSP00000418754"/>
<dbReference type="PeptideAtlas" id="Q13308"/>
<dbReference type="ProteomicsDB" id="20212"/>
<dbReference type="ProteomicsDB" id="59293">
    <molecule id="Q13308-1"/>
</dbReference>
<dbReference type="ProteomicsDB" id="59294">
    <molecule id="Q13308-2"/>
</dbReference>
<dbReference type="ProteomicsDB" id="59295">
    <molecule id="Q13308-3"/>
</dbReference>
<dbReference type="ProteomicsDB" id="59296">
    <molecule id="Q13308-4"/>
</dbReference>
<dbReference type="ProteomicsDB" id="59297">
    <molecule id="Q13308-5"/>
</dbReference>
<dbReference type="Pumba" id="Q13308"/>
<dbReference type="TopDownProteomics" id="Q13308-3">
    <molecule id="Q13308-3"/>
</dbReference>
<dbReference type="ABCD" id="Q13308">
    <property type="antibodies" value="1 sequenced antibody"/>
</dbReference>
<dbReference type="Antibodypedia" id="1008">
    <property type="antibodies" value="613 antibodies from 38 providers"/>
</dbReference>
<dbReference type="DNASU" id="5754"/>
<dbReference type="Ensembl" id="ENST00000230418.8">
    <molecule id="Q13308-5"/>
    <property type="protein sequence ID" value="ENSP00000230418.4"/>
    <property type="gene ID" value="ENSG00000112655.16"/>
</dbReference>
<dbReference type="Ensembl" id="ENST00000230419.9">
    <molecule id="Q13308-1"/>
    <property type="protein sequence ID" value="ENSP00000230419.4"/>
    <property type="gene ID" value="ENSG00000112655.16"/>
</dbReference>
<dbReference type="Ensembl" id="ENST00000345201.6">
    <molecule id="Q13308-2"/>
    <property type="protein sequence ID" value="ENSP00000325992.4"/>
    <property type="gene ID" value="ENSG00000112655.16"/>
</dbReference>
<dbReference type="Ensembl" id="ENST00000349241.6">
    <molecule id="Q13308-3"/>
    <property type="protein sequence ID" value="ENSP00000325462.4"/>
    <property type="gene ID" value="ENSG00000112655.16"/>
</dbReference>
<dbReference type="Ensembl" id="ENST00000352931.6">
    <molecule id="Q13308-4"/>
    <property type="protein sequence ID" value="ENSP00000326029.3"/>
    <property type="gene ID" value="ENSG00000112655.16"/>
</dbReference>
<dbReference type="Ensembl" id="ENST00000481273.5">
    <molecule id="Q13308-6"/>
    <property type="protein sequence ID" value="ENSP00000418754.1"/>
    <property type="gene ID" value="ENSG00000112655.16"/>
</dbReference>
<dbReference type="GeneID" id="5754"/>
<dbReference type="KEGG" id="hsa:5754"/>
<dbReference type="MANE-Select" id="ENST00000230419.9">
    <property type="protein sequence ID" value="ENSP00000230419.4"/>
    <property type="RefSeq nucleotide sequence ID" value="NM_002821.5"/>
    <property type="RefSeq protein sequence ID" value="NP_002812.2"/>
</dbReference>
<dbReference type="UCSC" id="uc003oub.3">
    <molecule id="Q13308-1"/>
    <property type="organism name" value="human"/>
</dbReference>
<dbReference type="AGR" id="HGNC:9618"/>
<dbReference type="CTD" id="5754"/>
<dbReference type="DisGeNET" id="5754"/>
<dbReference type="GeneCards" id="PTK7"/>
<dbReference type="HGNC" id="HGNC:9618">
    <property type="gene designation" value="PTK7"/>
</dbReference>
<dbReference type="HPA" id="ENSG00000112655">
    <property type="expression patterns" value="Low tissue specificity"/>
</dbReference>
<dbReference type="MIM" id="601890">
    <property type="type" value="gene"/>
</dbReference>
<dbReference type="neXtProt" id="NX_Q13308"/>
<dbReference type="OpenTargets" id="ENSG00000112655"/>
<dbReference type="PharmGKB" id="PA33961"/>
<dbReference type="VEuPathDB" id="HostDB:ENSG00000112655"/>
<dbReference type="eggNOG" id="KOG1026">
    <property type="taxonomic scope" value="Eukaryota"/>
</dbReference>
<dbReference type="eggNOG" id="KOG4475">
    <property type="taxonomic scope" value="Eukaryota"/>
</dbReference>
<dbReference type="GeneTree" id="ENSGT00940000157908"/>
<dbReference type="HOGENOM" id="CLU_012268_0_0_1"/>
<dbReference type="InParanoid" id="Q13308"/>
<dbReference type="OMA" id="HKILTSC"/>
<dbReference type="OrthoDB" id="2413561at2759"/>
<dbReference type="PAN-GO" id="Q13308">
    <property type="GO annotations" value="5 GO annotations based on evolutionary models"/>
</dbReference>
<dbReference type="PhylomeDB" id="Q13308"/>
<dbReference type="TreeFam" id="TF326835"/>
<dbReference type="PathwayCommons" id="Q13308"/>
<dbReference type="SignaLink" id="Q13308"/>
<dbReference type="SIGNOR" id="Q13308"/>
<dbReference type="BioGRID-ORCS" id="5754">
    <property type="hits" value="19 hits in 1197 CRISPR screens"/>
</dbReference>
<dbReference type="CD-CODE" id="91857CE7">
    <property type="entry name" value="Nucleolus"/>
</dbReference>
<dbReference type="ChiTaRS" id="PTK7">
    <property type="organism name" value="human"/>
</dbReference>
<dbReference type="GeneWiki" id="PTK7"/>
<dbReference type="GenomeRNAi" id="5754"/>
<dbReference type="Pharos" id="Q13308">
    <property type="development level" value="Tbio"/>
</dbReference>
<dbReference type="PRO" id="PR:Q13308"/>
<dbReference type="Proteomes" id="UP000005640">
    <property type="component" value="Chromosome 6"/>
</dbReference>
<dbReference type="RNAct" id="Q13308">
    <property type="molecule type" value="protein"/>
</dbReference>
<dbReference type="Bgee" id="ENSG00000112655">
    <property type="expression patterns" value="Expressed in stromal cell of endometrium and 127 other cell types or tissues"/>
</dbReference>
<dbReference type="ExpressionAtlas" id="Q13308">
    <property type="expression patterns" value="baseline and differential"/>
</dbReference>
<dbReference type="GO" id="GO:0030424">
    <property type="term" value="C:axon"/>
    <property type="evidence" value="ECO:0000318"/>
    <property type="project" value="GO_Central"/>
</dbReference>
<dbReference type="GO" id="GO:0005911">
    <property type="term" value="C:cell-cell junction"/>
    <property type="evidence" value="ECO:0000314"/>
    <property type="project" value="UniProtKB"/>
</dbReference>
<dbReference type="GO" id="GO:0005829">
    <property type="term" value="C:cytosol"/>
    <property type="evidence" value="ECO:0000314"/>
    <property type="project" value="HPA"/>
</dbReference>
<dbReference type="GO" id="GO:0005925">
    <property type="term" value="C:focal adhesion"/>
    <property type="evidence" value="ECO:0007005"/>
    <property type="project" value="UniProtKB"/>
</dbReference>
<dbReference type="GO" id="GO:0043231">
    <property type="term" value="C:intracellular membrane-bounded organelle"/>
    <property type="evidence" value="ECO:0000314"/>
    <property type="project" value="HPA"/>
</dbReference>
<dbReference type="GO" id="GO:0043025">
    <property type="term" value="C:neuronal cell body"/>
    <property type="evidence" value="ECO:0000318"/>
    <property type="project" value="GO_Central"/>
</dbReference>
<dbReference type="GO" id="GO:0005886">
    <property type="term" value="C:plasma membrane"/>
    <property type="evidence" value="ECO:0000314"/>
    <property type="project" value="HPA"/>
</dbReference>
<dbReference type="GO" id="GO:0005524">
    <property type="term" value="F:ATP binding"/>
    <property type="evidence" value="ECO:0007669"/>
    <property type="project" value="InterPro"/>
</dbReference>
<dbReference type="GO" id="GO:0008046">
    <property type="term" value="F:axon guidance receptor activity"/>
    <property type="evidence" value="ECO:0000318"/>
    <property type="project" value="GO_Central"/>
</dbReference>
<dbReference type="GO" id="GO:0015026">
    <property type="term" value="F:coreceptor activity"/>
    <property type="evidence" value="ECO:0000303"/>
    <property type="project" value="ParkinsonsUK-UCL"/>
</dbReference>
<dbReference type="GO" id="GO:0004672">
    <property type="term" value="F:protein kinase activity"/>
    <property type="evidence" value="ECO:0007669"/>
    <property type="project" value="InterPro"/>
</dbReference>
<dbReference type="GO" id="GO:0030036">
    <property type="term" value="P:actin cytoskeleton organization"/>
    <property type="evidence" value="ECO:0000315"/>
    <property type="project" value="UniProtKB"/>
</dbReference>
<dbReference type="GO" id="GO:0003401">
    <property type="term" value="P:axis elongation"/>
    <property type="evidence" value="ECO:0007669"/>
    <property type="project" value="Ensembl"/>
</dbReference>
<dbReference type="GO" id="GO:0016477">
    <property type="term" value="P:cell migration"/>
    <property type="evidence" value="ECO:0000315"/>
    <property type="project" value="UniProtKB"/>
</dbReference>
<dbReference type="GO" id="GO:0071300">
    <property type="term" value="P:cellular response to retinoic acid"/>
    <property type="evidence" value="ECO:0000315"/>
    <property type="project" value="BHF-UCL"/>
</dbReference>
<dbReference type="GO" id="GO:0090103">
    <property type="term" value="P:cochlea morphogenesis"/>
    <property type="evidence" value="ECO:0007669"/>
    <property type="project" value="Ensembl"/>
</dbReference>
<dbReference type="GO" id="GO:0060026">
    <property type="term" value="P:convergent extension"/>
    <property type="evidence" value="ECO:0007669"/>
    <property type="project" value="Ensembl"/>
</dbReference>
<dbReference type="GO" id="GO:0060976">
    <property type="term" value="P:coronary vasculature development"/>
    <property type="evidence" value="ECO:0007669"/>
    <property type="project" value="Ensembl"/>
</dbReference>
<dbReference type="GO" id="GO:0045198">
    <property type="term" value="P:establishment of epithelial cell apical/basal polarity"/>
    <property type="evidence" value="ECO:0007669"/>
    <property type="project" value="Ensembl"/>
</dbReference>
<dbReference type="GO" id="GO:0001736">
    <property type="term" value="P:establishment of planar polarity"/>
    <property type="evidence" value="ECO:0007669"/>
    <property type="project" value="Ensembl"/>
</dbReference>
<dbReference type="GO" id="GO:0007156">
    <property type="term" value="P:homophilic cell adhesion via plasma membrane adhesion molecules"/>
    <property type="evidence" value="ECO:0000318"/>
    <property type="project" value="GO_Central"/>
</dbReference>
<dbReference type="GO" id="GO:0001822">
    <property type="term" value="P:kidney development"/>
    <property type="evidence" value="ECO:0007669"/>
    <property type="project" value="Ensembl"/>
</dbReference>
<dbReference type="GO" id="GO:0060484">
    <property type="term" value="P:lung-associated mesenchyme development"/>
    <property type="evidence" value="ECO:0007669"/>
    <property type="project" value="Ensembl"/>
</dbReference>
<dbReference type="GO" id="GO:0001843">
    <property type="term" value="P:neural tube closure"/>
    <property type="evidence" value="ECO:0007669"/>
    <property type="project" value="Ensembl"/>
</dbReference>
<dbReference type="GO" id="GO:0090263">
    <property type="term" value="P:positive regulation of canonical Wnt signaling pathway"/>
    <property type="evidence" value="ECO:0000315"/>
    <property type="project" value="UniProtKB"/>
</dbReference>
<dbReference type="GO" id="GO:0010976">
    <property type="term" value="P:positive regulation of neuron projection development"/>
    <property type="evidence" value="ECO:0000315"/>
    <property type="project" value="BHF-UCL"/>
</dbReference>
<dbReference type="GO" id="GO:0060828">
    <property type="term" value="P:regulation of canonical Wnt signaling pathway"/>
    <property type="evidence" value="ECO:0000318"/>
    <property type="project" value="GO_Central"/>
</dbReference>
<dbReference type="GO" id="GO:0007165">
    <property type="term" value="P:signal transduction"/>
    <property type="evidence" value="ECO:0000304"/>
    <property type="project" value="ProtInc"/>
</dbReference>
<dbReference type="GO" id="GO:0050808">
    <property type="term" value="P:synapse organization"/>
    <property type="evidence" value="ECO:0000318"/>
    <property type="project" value="GO_Central"/>
</dbReference>
<dbReference type="GO" id="GO:0003281">
    <property type="term" value="P:ventricular septum development"/>
    <property type="evidence" value="ECO:0007669"/>
    <property type="project" value="Ensembl"/>
</dbReference>
<dbReference type="GO" id="GO:0016055">
    <property type="term" value="P:Wnt signaling pathway"/>
    <property type="evidence" value="ECO:0007669"/>
    <property type="project" value="UniProtKB-KW"/>
</dbReference>
<dbReference type="GO" id="GO:0042060">
    <property type="term" value="P:wound healing"/>
    <property type="evidence" value="ECO:0007669"/>
    <property type="project" value="Ensembl"/>
</dbReference>
<dbReference type="CDD" id="cd00096">
    <property type="entry name" value="Ig"/>
    <property type="match status" value="2"/>
</dbReference>
<dbReference type="CDD" id="cd05760">
    <property type="entry name" value="Ig2_PTK7"/>
    <property type="match status" value="1"/>
</dbReference>
<dbReference type="CDD" id="cd05046">
    <property type="entry name" value="PTK_CCK4"/>
    <property type="match status" value="1"/>
</dbReference>
<dbReference type="FunFam" id="1.10.510.10:FF:000200">
    <property type="entry name" value="inactive tyrosine-protein kinase 7"/>
    <property type="match status" value="1"/>
</dbReference>
<dbReference type="FunFam" id="2.60.40.10:FF:000341">
    <property type="entry name" value="inactive tyrosine-protein kinase 7"/>
    <property type="match status" value="1"/>
</dbReference>
<dbReference type="FunFam" id="2.60.40.10:FF:000343">
    <property type="entry name" value="inactive tyrosine-protein kinase 7"/>
    <property type="match status" value="1"/>
</dbReference>
<dbReference type="FunFam" id="2.60.40.10:FF:000377">
    <property type="entry name" value="Protein tyrosine kinase 7 (inactive)"/>
    <property type="match status" value="1"/>
</dbReference>
<dbReference type="FunFam" id="2.60.40.10:FF:000390">
    <property type="entry name" value="Protein tyrosine kinase 7 (inactive)"/>
    <property type="match status" value="1"/>
</dbReference>
<dbReference type="FunFam" id="2.60.40.10:FF:000395">
    <property type="entry name" value="Protein tyrosine kinase 7 (inactive)"/>
    <property type="match status" value="1"/>
</dbReference>
<dbReference type="FunFam" id="2.60.40.10:FF:000402">
    <property type="entry name" value="Protein tyrosine kinase 7 (inactive)"/>
    <property type="match status" value="1"/>
</dbReference>
<dbReference type="FunFam" id="2.60.40.10:FF:000432">
    <property type="entry name" value="Protein tyrosine kinase 7 (inactive)"/>
    <property type="match status" value="1"/>
</dbReference>
<dbReference type="FunFam" id="3.30.200.20:FF:000167">
    <property type="entry name" value="Putative inactive tyrosine-protein kinase 7"/>
    <property type="match status" value="1"/>
</dbReference>
<dbReference type="Gene3D" id="2.60.40.10">
    <property type="entry name" value="Immunoglobulins"/>
    <property type="match status" value="7"/>
</dbReference>
<dbReference type="Gene3D" id="3.30.200.20">
    <property type="entry name" value="Phosphorylase Kinase, domain 1"/>
    <property type="match status" value="1"/>
</dbReference>
<dbReference type="Gene3D" id="1.10.510.10">
    <property type="entry name" value="Transferase(Phosphotransferase) domain 1"/>
    <property type="match status" value="1"/>
</dbReference>
<dbReference type="InterPro" id="IPR050958">
    <property type="entry name" value="Cell_Adh-Cytoskel_Orgn"/>
</dbReference>
<dbReference type="InterPro" id="IPR007110">
    <property type="entry name" value="Ig-like_dom"/>
</dbReference>
<dbReference type="InterPro" id="IPR036179">
    <property type="entry name" value="Ig-like_dom_sf"/>
</dbReference>
<dbReference type="InterPro" id="IPR013783">
    <property type="entry name" value="Ig-like_fold"/>
</dbReference>
<dbReference type="InterPro" id="IPR013098">
    <property type="entry name" value="Ig_I-set"/>
</dbReference>
<dbReference type="InterPro" id="IPR003599">
    <property type="entry name" value="Ig_sub"/>
</dbReference>
<dbReference type="InterPro" id="IPR003598">
    <property type="entry name" value="Ig_sub2"/>
</dbReference>
<dbReference type="InterPro" id="IPR011009">
    <property type="entry name" value="Kinase-like_dom_sf"/>
</dbReference>
<dbReference type="InterPro" id="IPR000719">
    <property type="entry name" value="Prot_kinase_dom"/>
</dbReference>
<dbReference type="InterPro" id="IPR001245">
    <property type="entry name" value="Ser-Thr/Tyr_kinase_cat_dom"/>
</dbReference>
<dbReference type="InterPro" id="IPR008266">
    <property type="entry name" value="Tyr_kinase_AS"/>
</dbReference>
<dbReference type="PANTHER" id="PTHR45080">
    <property type="entry name" value="CONTACTIN 5"/>
    <property type="match status" value="1"/>
</dbReference>
<dbReference type="PANTHER" id="PTHR45080:SF21">
    <property type="entry name" value="INACTIVE TYROSINE-PROTEIN KINASE 7"/>
    <property type="match status" value="1"/>
</dbReference>
<dbReference type="Pfam" id="PF07679">
    <property type="entry name" value="I-set"/>
    <property type="match status" value="3"/>
</dbReference>
<dbReference type="Pfam" id="PF13927">
    <property type="entry name" value="Ig_3"/>
    <property type="match status" value="4"/>
</dbReference>
<dbReference type="Pfam" id="PF07714">
    <property type="entry name" value="PK_Tyr_Ser-Thr"/>
    <property type="match status" value="1"/>
</dbReference>
<dbReference type="PRINTS" id="PR00109">
    <property type="entry name" value="TYRKINASE"/>
</dbReference>
<dbReference type="SMART" id="SM00409">
    <property type="entry name" value="IG"/>
    <property type="match status" value="7"/>
</dbReference>
<dbReference type="SMART" id="SM00408">
    <property type="entry name" value="IGc2"/>
    <property type="match status" value="7"/>
</dbReference>
<dbReference type="SUPFAM" id="SSF48726">
    <property type="entry name" value="Immunoglobulin"/>
    <property type="match status" value="7"/>
</dbReference>
<dbReference type="SUPFAM" id="SSF56112">
    <property type="entry name" value="Protein kinase-like (PK-like)"/>
    <property type="match status" value="1"/>
</dbReference>
<dbReference type="PROSITE" id="PS50835">
    <property type="entry name" value="IG_LIKE"/>
    <property type="match status" value="7"/>
</dbReference>
<dbReference type="PROSITE" id="PS50011">
    <property type="entry name" value="PROTEIN_KINASE_DOM"/>
    <property type="match status" value="1"/>
</dbReference>
<dbReference type="PROSITE" id="PS00109">
    <property type="entry name" value="PROTEIN_KINASE_TYR"/>
    <property type="match status" value="1"/>
</dbReference>